<evidence type="ECO:0000250" key="1"/>
<evidence type="ECO:0000255" key="2"/>
<evidence type="ECO:0000269" key="3">
    <source>
    </source>
</evidence>
<evidence type="ECO:0000305" key="4"/>
<name>GLYM_SCHPO</name>
<organism>
    <name type="scientific">Schizosaccharomyces pombe (strain 972 / ATCC 24843)</name>
    <name type="common">Fission yeast</name>
    <dbReference type="NCBI Taxonomy" id="284812"/>
    <lineage>
        <taxon>Eukaryota</taxon>
        <taxon>Fungi</taxon>
        <taxon>Dikarya</taxon>
        <taxon>Ascomycota</taxon>
        <taxon>Taphrinomycotina</taxon>
        <taxon>Schizosaccharomycetes</taxon>
        <taxon>Schizosaccharomycetales</taxon>
        <taxon>Schizosaccharomycetaceae</taxon>
        <taxon>Schizosaccharomyces</taxon>
    </lineage>
</organism>
<protein>
    <recommendedName>
        <fullName>Serine hydroxymethyltransferase, mitochondrial</fullName>
        <shortName>SHMT</shortName>
        <ecNumber>2.1.2.1</ecNumber>
    </recommendedName>
    <alternativeName>
        <fullName>Glycine hydroxymethyltransferase</fullName>
    </alternativeName>
    <alternativeName>
        <fullName>Serine methylase</fullName>
    </alternativeName>
</protein>
<feature type="transit peptide" description="Mitochondrion" evidence="2">
    <location>
        <begin position="1"/>
        <end position="20"/>
    </location>
</feature>
<feature type="chain" id="PRO_0000113514" description="Serine hydroxymethyltransferase, mitochondrial">
    <location>
        <begin position="21"/>
        <end position="488"/>
    </location>
</feature>
<feature type="modified residue" description="N6-(pyridoxal phosphate)lysine" evidence="1">
    <location>
        <position position="265"/>
    </location>
</feature>
<sequence>MAVLRQFVKNSYSSIPKRFYALSANQKKLLKAPLAECDPTVYKILESEKSRQKESIALIASENFTSRAVMDALGSIMQNKYSEGYPGARYYGGNEFIDQAERLCQTRALEAFHLDGEKWGVNVQPHSGSPANLQAYQAVMKPHDRLMGLDLPHGGHLSHGFSTPQKAISAVSTYFSTMPYNVNKETGIIDYDSLEKAAIQFRPKVIVAGASAYARLVDYKRMRKITEMCNAYLLCDMAHISGLVAAGVIPSPFEYADIVTTTTHKSLRGPRGAMIFYRKGTRSHDKRGNPILYELEDKINFSVFPGHQGGPHNHTITALAVALGQAKTPEFYQYQKDVLSNAKAMANAFITRGYKLVSGGTDTHLVLVDLTDKGVDGARVERILELVNISANKNTVPGDKSALIPRGLRLGTPACTTRGFDEKDFERVVELIDEVVSLTKKINEAALKEGKSKFRDFKAYVGDGSKFSEIAKLKKEVITWAGKFDFPV</sequence>
<dbReference type="EC" id="2.1.2.1"/>
<dbReference type="EMBL" id="CU329670">
    <property type="protein sequence ID" value="CAA92384.2"/>
    <property type="molecule type" value="Genomic_DNA"/>
</dbReference>
<dbReference type="PIR" id="T37918">
    <property type="entry name" value="T37918"/>
</dbReference>
<dbReference type="RefSeq" id="NP_593668.2">
    <property type="nucleotide sequence ID" value="NM_001019100.2"/>
</dbReference>
<dbReference type="SMR" id="Q10104"/>
<dbReference type="BioGRID" id="278713">
    <property type="interactions" value="11"/>
</dbReference>
<dbReference type="FunCoup" id="Q10104">
    <property type="interactions" value="696"/>
</dbReference>
<dbReference type="STRING" id="284812.Q10104"/>
<dbReference type="PaxDb" id="4896-SPAC18G6.04c.1"/>
<dbReference type="EnsemblFungi" id="SPAC18G6.04c.1">
    <property type="protein sequence ID" value="SPAC18G6.04c.1:pep"/>
    <property type="gene ID" value="SPAC18G6.04c"/>
</dbReference>
<dbReference type="GeneID" id="2542242"/>
<dbReference type="KEGG" id="spo:2542242"/>
<dbReference type="PomBase" id="SPAC18G6.04c">
    <property type="gene designation" value="shm2"/>
</dbReference>
<dbReference type="VEuPathDB" id="FungiDB:SPAC18G6.04c"/>
<dbReference type="eggNOG" id="KOG2467">
    <property type="taxonomic scope" value="Eukaryota"/>
</dbReference>
<dbReference type="HOGENOM" id="CLU_022477_0_1_1"/>
<dbReference type="InParanoid" id="Q10104"/>
<dbReference type="OMA" id="TQPFFSQ"/>
<dbReference type="UniPathway" id="UPA00193"/>
<dbReference type="PRO" id="PR:Q10104"/>
<dbReference type="Proteomes" id="UP000002485">
    <property type="component" value="Chromosome I"/>
</dbReference>
<dbReference type="GO" id="GO:0005737">
    <property type="term" value="C:cytoplasm"/>
    <property type="evidence" value="ECO:0000318"/>
    <property type="project" value="GO_Central"/>
</dbReference>
<dbReference type="GO" id="GO:0005739">
    <property type="term" value="C:mitochondrion"/>
    <property type="evidence" value="ECO:0007005"/>
    <property type="project" value="PomBase"/>
</dbReference>
<dbReference type="GO" id="GO:0004372">
    <property type="term" value="F:glycine hydroxymethyltransferase activity"/>
    <property type="evidence" value="ECO:0000318"/>
    <property type="project" value="GO_Central"/>
</dbReference>
<dbReference type="GO" id="GO:0030170">
    <property type="term" value="F:pyridoxal phosphate binding"/>
    <property type="evidence" value="ECO:0000318"/>
    <property type="project" value="GO_Central"/>
</dbReference>
<dbReference type="GO" id="GO:0019264">
    <property type="term" value="P:glycine biosynthetic process from serine"/>
    <property type="evidence" value="ECO:0000318"/>
    <property type="project" value="GO_Central"/>
</dbReference>
<dbReference type="GO" id="GO:0035999">
    <property type="term" value="P:tetrahydrofolate interconversion"/>
    <property type="evidence" value="ECO:0007669"/>
    <property type="project" value="UniProtKB-UniPathway"/>
</dbReference>
<dbReference type="GO" id="GO:0046653">
    <property type="term" value="P:tetrahydrofolate metabolic process"/>
    <property type="evidence" value="ECO:0000318"/>
    <property type="project" value="GO_Central"/>
</dbReference>
<dbReference type="CDD" id="cd00378">
    <property type="entry name" value="SHMT"/>
    <property type="match status" value="1"/>
</dbReference>
<dbReference type="FunFam" id="3.40.640.10:FF:000097">
    <property type="entry name" value="Serine hydroxymethyltransferase"/>
    <property type="match status" value="1"/>
</dbReference>
<dbReference type="FunFam" id="3.90.1150.10:FF:000120">
    <property type="entry name" value="Serine hydroxymethyltransferase"/>
    <property type="match status" value="1"/>
</dbReference>
<dbReference type="Gene3D" id="3.90.1150.10">
    <property type="entry name" value="Aspartate Aminotransferase, domain 1"/>
    <property type="match status" value="1"/>
</dbReference>
<dbReference type="Gene3D" id="3.40.640.10">
    <property type="entry name" value="Type I PLP-dependent aspartate aminotransferase-like (Major domain)"/>
    <property type="match status" value="1"/>
</dbReference>
<dbReference type="HAMAP" id="MF_00051">
    <property type="entry name" value="SHMT"/>
    <property type="match status" value="1"/>
</dbReference>
<dbReference type="InterPro" id="IPR015424">
    <property type="entry name" value="PyrdxlP-dep_Trfase"/>
</dbReference>
<dbReference type="InterPro" id="IPR015421">
    <property type="entry name" value="PyrdxlP-dep_Trfase_major"/>
</dbReference>
<dbReference type="InterPro" id="IPR015422">
    <property type="entry name" value="PyrdxlP-dep_Trfase_small"/>
</dbReference>
<dbReference type="InterPro" id="IPR001085">
    <property type="entry name" value="Ser_HO-MeTrfase"/>
</dbReference>
<dbReference type="InterPro" id="IPR049943">
    <property type="entry name" value="Ser_HO-MeTrfase-like"/>
</dbReference>
<dbReference type="InterPro" id="IPR019798">
    <property type="entry name" value="Ser_HO-MeTrfase_PLP_BS"/>
</dbReference>
<dbReference type="InterPro" id="IPR039429">
    <property type="entry name" value="SHMT-like_dom"/>
</dbReference>
<dbReference type="NCBIfam" id="NF000586">
    <property type="entry name" value="PRK00011.1"/>
    <property type="match status" value="1"/>
</dbReference>
<dbReference type="PANTHER" id="PTHR11680">
    <property type="entry name" value="SERINE HYDROXYMETHYLTRANSFERASE"/>
    <property type="match status" value="1"/>
</dbReference>
<dbReference type="PANTHER" id="PTHR11680:SF28">
    <property type="entry name" value="SERINE HYDROXYMETHYLTRANSFERASE, MITOCHONDRIAL"/>
    <property type="match status" value="1"/>
</dbReference>
<dbReference type="Pfam" id="PF00464">
    <property type="entry name" value="SHMT"/>
    <property type="match status" value="1"/>
</dbReference>
<dbReference type="PIRSF" id="PIRSF000412">
    <property type="entry name" value="SHMT"/>
    <property type="match status" value="1"/>
</dbReference>
<dbReference type="SUPFAM" id="SSF53383">
    <property type="entry name" value="PLP-dependent transferases"/>
    <property type="match status" value="1"/>
</dbReference>
<dbReference type="PROSITE" id="PS00096">
    <property type="entry name" value="SHMT"/>
    <property type="match status" value="1"/>
</dbReference>
<comment type="function">
    <text evidence="1">Interconversion of serine and glycine.</text>
</comment>
<comment type="catalytic activity">
    <reaction>
        <text>(6R)-5,10-methylene-5,6,7,8-tetrahydrofolate + glycine + H2O = (6S)-5,6,7,8-tetrahydrofolate + L-serine</text>
        <dbReference type="Rhea" id="RHEA:15481"/>
        <dbReference type="ChEBI" id="CHEBI:15377"/>
        <dbReference type="ChEBI" id="CHEBI:15636"/>
        <dbReference type="ChEBI" id="CHEBI:33384"/>
        <dbReference type="ChEBI" id="CHEBI:57305"/>
        <dbReference type="ChEBI" id="CHEBI:57453"/>
        <dbReference type="EC" id="2.1.2.1"/>
    </reaction>
</comment>
<comment type="cofactor">
    <cofactor evidence="1">
        <name>pyridoxal 5'-phosphate</name>
        <dbReference type="ChEBI" id="CHEBI:597326"/>
    </cofactor>
</comment>
<comment type="pathway">
    <text>One-carbon metabolism; tetrahydrofolate interconversion.</text>
</comment>
<comment type="subunit">
    <text evidence="1">Homotetramer.</text>
</comment>
<comment type="subcellular location">
    <subcellularLocation>
        <location evidence="3">Mitochondrion</location>
    </subcellularLocation>
</comment>
<comment type="similarity">
    <text evidence="4">Belongs to the SHMT family.</text>
</comment>
<reference key="1">
    <citation type="journal article" date="2002" name="Nature">
        <title>The genome sequence of Schizosaccharomyces pombe.</title>
        <authorList>
            <person name="Wood V."/>
            <person name="Gwilliam R."/>
            <person name="Rajandream M.A."/>
            <person name="Lyne M.H."/>
            <person name="Lyne R."/>
            <person name="Stewart A."/>
            <person name="Sgouros J.G."/>
            <person name="Peat N."/>
            <person name="Hayles J."/>
            <person name="Baker S.G."/>
            <person name="Basham D."/>
            <person name="Bowman S."/>
            <person name="Brooks K."/>
            <person name="Brown D."/>
            <person name="Brown S."/>
            <person name="Chillingworth T."/>
            <person name="Churcher C.M."/>
            <person name="Collins M."/>
            <person name="Connor R."/>
            <person name="Cronin A."/>
            <person name="Davis P."/>
            <person name="Feltwell T."/>
            <person name="Fraser A."/>
            <person name="Gentles S."/>
            <person name="Goble A."/>
            <person name="Hamlin N."/>
            <person name="Harris D.E."/>
            <person name="Hidalgo J."/>
            <person name="Hodgson G."/>
            <person name="Holroyd S."/>
            <person name="Hornsby T."/>
            <person name="Howarth S."/>
            <person name="Huckle E.J."/>
            <person name="Hunt S."/>
            <person name="Jagels K."/>
            <person name="James K.D."/>
            <person name="Jones L."/>
            <person name="Jones M."/>
            <person name="Leather S."/>
            <person name="McDonald S."/>
            <person name="McLean J."/>
            <person name="Mooney P."/>
            <person name="Moule S."/>
            <person name="Mungall K.L."/>
            <person name="Murphy L.D."/>
            <person name="Niblett D."/>
            <person name="Odell C."/>
            <person name="Oliver K."/>
            <person name="O'Neil S."/>
            <person name="Pearson D."/>
            <person name="Quail M.A."/>
            <person name="Rabbinowitsch E."/>
            <person name="Rutherford K.M."/>
            <person name="Rutter S."/>
            <person name="Saunders D."/>
            <person name="Seeger K."/>
            <person name="Sharp S."/>
            <person name="Skelton J."/>
            <person name="Simmonds M.N."/>
            <person name="Squares R."/>
            <person name="Squares S."/>
            <person name="Stevens K."/>
            <person name="Taylor K."/>
            <person name="Taylor R.G."/>
            <person name="Tivey A."/>
            <person name="Walsh S.V."/>
            <person name="Warren T."/>
            <person name="Whitehead S."/>
            <person name="Woodward J.R."/>
            <person name="Volckaert G."/>
            <person name="Aert R."/>
            <person name="Robben J."/>
            <person name="Grymonprez B."/>
            <person name="Weltjens I."/>
            <person name="Vanstreels E."/>
            <person name="Rieger M."/>
            <person name="Schaefer M."/>
            <person name="Mueller-Auer S."/>
            <person name="Gabel C."/>
            <person name="Fuchs M."/>
            <person name="Duesterhoeft A."/>
            <person name="Fritzc C."/>
            <person name="Holzer E."/>
            <person name="Moestl D."/>
            <person name="Hilbert H."/>
            <person name="Borzym K."/>
            <person name="Langer I."/>
            <person name="Beck A."/>
            <person name="Lehrach H."/>
            <person name="Reinhardt R."/>
            <person name="Pohl T.M."/>
            <person name="Eger P."/>
            <person name="Zimmermann W."/>
            <person name="Wedler H."/>
            <person name="Wambutt R."/>
            <person name="Purnelle B."/>
            <person name="Goffeau A."/>
            <person name="Cadieu E."/>
            <person name="Dreano S."/>
            <person name="Gloux S."/>
            <person name="Lelaure V."/>
            <person name="Mottier S."/>
            <person name="Galibert F."/>
            <person name="Aves S.J."/>
            <person name="Xiang Z."/>
            <person name="Hunt C."/>
            <person name="Moore K."/>
            <person name="Hurst S.M."/>
            <person name="Lucas M."/>
            <person name="Rochet M."/>
            <person name="Gaillardin C."/>
            <person name="Tallada V.A."/>
            <person name="Garzon A."/>
            <person name="Thode G."/>
            <person name="Daga R.R."/>
            <person name="Cruzado L."/>
            <person name="Jimenez J."/>
            <person name="Sanchez M."/>
            <person name="del Rey F."/>
            <person name="Benito J."/>
            <person name="Dominguez A."/>
            <person name="Revuelta J.L."/>
            <person name="Moreno S."/>
            <person name="Armstrong J."/>
            <person name="Forsburg S.L."/>
            <person name="Cerutti L."/>
            <person name="Lowe T."/>
            <person name="McCombie W.R."/>
            <person name="Paulsen I."/>
            <person name="Potashkin J."/>
            <person name="Shpakovski G.V."/>
            <person name="Ussery D."/>
            <person name="Barrell B.G."/>
            <person name="Nurse P."/>
        </authorList>
    </citation>
    <scope>NUCLEOTIDE SEQUENCE [LARGE SCALE GENOMIC DNA]</scope>
    <source>
        <strain>972 / ATCC 24843</strain>
    </source>
</reference>
<reference key="2">
    <citation type="journal article" date="2011" name="Science">
        <title>Comparative functional genomics of the fission yeasts.</title>
        <authorList>
            <person name="Rhind N."/>
            <person name="Chen Z."/>
            <person name="Yassour M."/>
            <person name="Thompson D.A."/>
            <person name="Haas B.J."/>
            <person name="Habib N."/>
            <person name="Wapinski I."/>
            <person name="Roy S."/>
            <person name="Lin M.F."/>
            <person name="Heiman D.I."/>
            <person name="Young S.K."/>
            <person name="Furuya K."/>
            <person name="Guo Y."/>
            <person name="Pidoux A."/>
            <person name="Chen H.M."/>
            <person name="Robbertse B."/>
            <person name="Goldberg J.M."/>
            <person name="Aoki K."/>
            <person name="Bayne E.H."/>
            <person name="Berlin A.M."/>
            <person name="Desjardins C.A."/>
            <person name="Dobbs E."/>
            <person name="Dukaj L."/>
            <person name="Fan L."/>
            <person name="FitzGerald M.G."/>
            <person name="French C."/>
            <person name="Gujja S."/>
            <person name="Hansen K."/>
            <person name="Keifenheim D."/>
            <person name="Levin J.Z."/>
            <person name="Mosher R.A."/>
            <person name="Mueller C.A."/>
            <person name="Pfiffner J."/>
            <person name="Priest M."/>
            <person name="Russ C."/>
            <person name="Smialowska A."/>
            <person name="Swoboda P."/>
            <person name="Sykes S.M."/>
            <person name="Vaughn M."/>
            <person name="Vengrova S."/>
            <person name="Yoder R."/>
            <person name="Zeng Q."/>
            <person name="Allshire R."/>
            <person name="Baulcombe D."/>
            <person name="Birren B.W."/>
            <person name="Brown W."/>
            <person name="Ekwall K."/>
            <person name="Kellis M."/>
            <person name="Leatherwood J."/>
            <person name="Levin H."/>
            <person name="Margalit H."/>
            <person name="Martienssen R."/>
            <person name="Nieduszynski C.A."/>
            <person name="Spatafora J.W."/>
            <person name="Friedman N."/>
            <person name="Dalgaard J.Z."/>
            <person name="Baumann P."/>
            <person name="Niki H."/>
            <person name="Regev A."/>
            <person name="Nusbaum C."/>
        </authorList>
    </citation>
    <scope>REVISION OF GENE MODEL</scope>
</reference>
<reference key="3">
    <citation type="journal article" date="2006" name="Nat. Biotechnol.">
        <title>ORFeome cloning and global analysis of protein localization in the fission yeast Schizosaccharomyces pombe.</title>
        <authorList>
            <person name="Matsuyama A."/>
            <person name="Arai R."/>
            <person name="Yashiroda Y."/>
            <person name="Shirai A."/>
            <person name="Kamata A."/>
            <person name="Sekido S."/>
            <person name="Kobayashi Y."/>
            <person name="Hashimoto A."/>
            <person name="Hamamoto M."/>
            <person name="Hiraoka Y."/>
            <person name="Horinouchi S."/>
            <person name="Yoshida M."/>
        </authorList>
    </citation>
    <scope>SUBCELLULAR LOCATION [LARGE SCALE ANALYSIS]</scope>
</reference>
<proteinExistence type="inferred from homology"/>
<keyword id="KW-0496">Mitochondrion</keyword>
<keyword id="KW-0554">One-carbon metabolism</keyword>
<keyword id="KW-0663">Pyridoxal phosphate</keyword>
<keyword id="KW-1185">Reference proteome</keyword>
<keyword id="KW-0808">Transferase</keyword>
<keyword id="KW-0809">Transit peptide</keyword>
<gene>
    <name type="primary">shm2</name>
    <name type="ORF">SPAC18G6.04c</name>
</gene>
<accession>Q10104</accession>